<organism>
    <name type="scientific">Chlorobium phaeobacteroides (strain DSM 266 / SMG 266 / 2430)</name>
    <dbReference type="NCBI Taxonomy" id="290317"/>
    <lineage>
        <taxon>Bacteria</taxon>
        <taxon>Pseudomonadati</taxon>
        <taxon>Chlorobiota</taxon>
        <taxon>Chlorobiia</taxon>
        <taxon>Chlorobiales</taxon>
        <taxon>Chlorobiaceae</taxon>
        <taxon>Chlorobium/Pelodictyon group</taxon>
        <taxon>Chlorobium</taxon>
    </lineage>
</organism>
<dbReference type="EC" id="3.1.26.4" evidence="1"/>
<dbReference type="EMBL" id="CP000492">
    <property type="protein sequence ID" value="ABL64637.1"/>
    <property type="molecule type" value="Genomic_DNA"/>
</dbReference>
<dbReference type="RefSeq" id="WP_011744470.1">
    <property type="nucleotide sequence ID" value="NC_008639.1"/>
</dbReference>
<dbReference type="SMR" id="A1BE10"/>
<dbReference type="STRING" id="290317.Cpha266_0581"/>
<dbReference type="KEGG" id="cph:Cpha266_0581"/>
<dbReference type="eggNOG" id="COG0328">
    <property type="taxonomic scope" value="Bacteria"/>
</dbReference>
<dbReference type="HOGENOM" id="CLU_030894_6_2_10"/>
<dbReference type="OrthoDB" id="7845843at2"/>
<dbReference type="Proteomes" id="UP000008701">
    <property type="component" value="Chromosome"/>
</dbReference>
<dbReference type="GO" id="GO:0005737">
    <property type="term" value="C:cytoplasm"/>
    <property type="evidence" value="ECO:0007669"/>
    <property type="project" value="UniProtKB-SubCell"/>
</dbReference>
<dbReference type="GO" id="GO:0000287">
    <property type="term" value="F:magnesium ion binding"/>
    <property type="evidence" value="ECO:0007669"/>
    <property type="project" value="UniProtKB-UniRule"/>
</dbReference>
<dbReference type="GO" id="GO:0003676">
    <property type="term" value="F:nucleic acid binding"/>
    <property type="evidence" value="ECO:0007669"/>
    <property type="project" value="InterPro"/>
</dbReference>
<dbReference type="GO" id="GO:0004523">
    <property type="term" value="F:RNA-DNA hybrid ribonuclease activity"/>
    <property type="evidence" value="ECO:0007669"/>
    <property type="project" value="UniProtKB-UniRule"/>
</dbReference>
<dbReference type="GO" id="GO:0043137">
    <property type="term" value="P:DNA replication, removal of RNA primer"/>
    <property type="evidence" value="ECO:0007669"/>
    <property type="project" value="TreeGrafter"/>
</dbReference>
<dbReference type="CDD" id="cd09278">
    <property type="entry name" value="RNase_HI_prokaryote_like"/>
    <property type="match status" value="1"/>
</dbReference>
<dbReference type="FunFam" id="3.30.420.10:FF:000089">
    <property type="entry name" value="Ribonuclease H"/>
    <property type="match status" value="1"/>
</dbReference>
<dbReference type="Gene3D" id="3.30.420.10">
    <property type="entry name" value="Ribonuclease H-like superfamily/Ribonuclease H"/>
    <property type="match status" value="1"/>
</dbReference>
<dbReference type="HAMAP" id="MF_00042">
    <property type="entry name" value="RNase_H"/>
    <property type="match status" value="1"/>
</dbReference>
<dbReference type="InterPro" id="IPR050092">
    <property type="entry name" value="RNase_H"/>
</dbReference>
<dbReference type="InterPro" id="IPR012337">
    <property type="entry name" value="RNaseH-like_sf"/>
</dbReference>
<dbReference type="InterPro" id="IPR002156">
    <property type="entry name" value="RNaseH_domain"/>
</dbReference>
<dbReference type="InterPro" id="IPR036397">
    <property type="entry name" value="RNaseH_sf"/>
</dbReference>
<dbReference type="InterPro" id="IPR022892">
    <property type="entry name" value="RNaseHI"/>
</dbReference>
<dbReference type="NCBIfam" id="NF001236">
    <property type="entry name" value="PRK00203.1"/>
    <property type="match status" value="1"/>
</dbReference>
<dbReference type="PANTHER" id="PTHR10642">
    <property type="entry name" value="RIBONUCLEASE H1"/>
    <property type="match status" value="1"/>
</dbReference>
<dbReference type="PANTHER" id="PTHR10642:SF26">
    <property type="entry name" value="RIBONUCLEASE H1"/>
    <property type="match status" value="1"/>
</dbReference>
<dbReference type="Pfam" id="PF00075">
    <property type="entry name" value="RNase_H"/>
    <property type="match status" value="1"/>
</dbReference>
<dbReference type="SUPFAM" id="SSF53098">
    <property type="entry name" value="Ribonuclease H-like"/>
    <property type="match status" value="1"/>
</dbReference>
<dbReference type="PROSITE" id="PS50879">
    <property type="entry name" value="RNASE_H_1"/>
    <property type="match status" value="1"/>
</dbReference>
<reference key="1">
    <citation type="submission" date="2006-12" db="EMBL/GenBank/DDBJ databases">
        <title>Complete sequence of Chlorobium phaeobacteroides DSM 266.</title>
        <authorList>
            <consortium name="US DOE Joint Genome Institute"/>
            <person name="Copeland A."/>
            <person name="Lucas S."/>
            <person name="Lapidus A."/>
            <person name="Barry K."/>
            <person name="Detter J.C."/>
            <person name="Glavina del Rio T."/>
            <person name="Hammon N."/>
            <person name="Israni S."/>
            <person name="Pitluck S."/>
            <person name="Goltsman E."/>
            <person name="Schmutz J."/>
            <person name="Larimer F."/>
            <person name="Land M."/>
            <person name="Hauser L."/>
            <person name="Mikhailova N."/>
            <person name="Li T."/>
            <person name="Overmann J."/>
            <person name="Bryant D.A."/>
            <person name="Richardson P."/>
        </authorList>
    </citation>
    <scope>NUCLEOTIDE SEQUENCE [LARGE SCALE GENOMIC DNA]</scope>
    <source>
        <strain>DSM 266 / SMG 266 / 2430</strain>
    </source>
</reference>
<sequence length="146" mass="16383">MQKKIIVYTDGACSGNPGKGGWGALLMYGASTREISGYSPATTNNRMELSAAIEALETLKEPCIVHLYSDSSYLVNAINEGWLKRWTANNWKTAAKKSVENIDLWQKILTLIKLHDVTFHKVKGHSDNPYNNRCDELARQAIKNNR</sequence>
<feature type="chain" id="PRO_0000332576" description="Ribonuclease H">
    <location>
        <begin position="1"/>
        <end position="146"/>
    </location>
</feature>
<feature type="domain" description="RNase H type-1" evidence="2">
    <location>
        <begin position="1"/>
        <end position="143"/>
    </location>
</feature>
<feature type="binding site" evidence="1">
    <location>
        <position position="10"/>
    </location>
    <ligand>
        <name>Mg(2+)</name>
        <dbReference type="ChEBI" id="CHEBI:18420"/>
        <label>1</label>
    </ligand>
</feature>
<feature type="binding site" evidence="1">
    <location>
        <position position="10"/>
    </location>
    <ligand>
        <name>Mg(2+)</name>
        <dbReference type="ChEBI" id="CHEBI:18420"/>
        <label>2</label>
    </ligand>
</feature>
<feature type="binding site" evidence="1">
    <location>
        <position position="48"/>
    </location>
    <ligand>
        <name>Mg(2+)</name>
        <dbReference type="ChEBI" id="CHEBI:18420"/>
        <label>1</label>
    </ligand>
</feature>
<feature type="binding site" evidence="1">
    <location>
        <position position="70"/>
    </location>
    <ligand>
        <name>Mg(2+)</name>
        <dbReference type="ChEBI" id="CHEBI:18420"/>
        <label>1</label>
    </ligand>
</feature>
<feature type="binding site" evidence="1">
    <location>
        <position position="135"/>
    </location>
    <ligand>
        <name>Mg(2+)</name>
        <dbReference type="ChEBI" id="CHEBI:18420"/>
        <label>2</label>
    </ligand>
</feature>
<proteinExistence type="inferred from homology"/>
<name>RNH_CHLPD</name>
<comment type="function">
    <text evidence="1">Endonuclease that specifically degrades the RNA of RNA-DNA hybrids.</text>
</comment>
<comment type="catalytic activity">
    <reaction evidence="1">
        <text>Endonucleolytic cleavage to 5'-phosphomonoester.</text>
        <dbReference type="EC" id="3.1.26.4"/>
    </reaction>
</comment>
<comment type="cofactor">
    <cofactor evidence="1">
        <name>Mg(2+)</name>
        <dbReference type="ChEBI" id="CHEBI:18420"/>
    </cofactor>
    <text evidence="1">Binds 1 Mg(2+) ion per subunit. May bind a second metal ion at a regulatory site, or after substrate binding.</text>
</comment>
<comment type="subunit">
    <text evidence="1">Monomer.</text>
</comment>
<comment type="subcellular location">
    <subcellularLocation>
        <location evidence="1">Cytoplasm</location>
    </subcellularLocation>
</comment>
<comment type="similarity">
    <text evidence="1">Belongs to the RNase H family.</text>
</comment>
<protein>
    <recommendedName>
        <fullName evidence="1">Ribonuclease H</fullName>
        <shortName evidence="1">RNase H</shortName>
        <ecNumber evidence="1">3.1.26.4</ecNumber>
    </recommendedName>
</protein>
<keyword id="KW-0963">Cytoplasm</keyword>
<keyword id="KW-0255">Endonuclease</keyword>
<keyword id="KW-0378">Hydrolase</keyword>
<keyword id="KW-0460">Magnesium</keyword>
<keyword id="KW-0479">Metal-binding</keyword>
<keyword id="KW-0540">Nuclease</keyword>
<keyword id="KW-1185">Reference proteome</keyword>
<gene>
    <name evidence="1" type="primary">rnhA</name>
    <name type="ordered locus">Cpha266_0581</name>
</gene>
<accession>A1BE10</accession>
<evidence type="ECO:0000255" key="1">
    <source>
        <dbReference type="HAMAP-Rule" id="MF_00042"/>
    </source>
</evidence>
<evidence type="ECO:0000255" key="2">
    <source>
        <dbReference type="PROSITE-ProRule" id="PRU00408"/>
    </source>
</evidence>